<name>ELOH2_SCHPO</name>
<keyword id="KW-0256">Endoplasmic reticulum</keyword>
<keyword id="KW-0275">Fatty acid biosynthesis</keyword>
<keyword id="KW-0276">Fatty acid metabolism</keyword>
<keyword id="KW-0325">Glycoprotein</keyword>
<keyword id="KW-0444">Lipid biosynthesis</keyword>
<keyword id="KW-0443">Lipid metabolism</keyword>
<keyword id="KW-0472">Membrane</keyword>
<keyword id="KW-1185">Reference proteome</keyword>
<keyword id="KW-0808">Transferase</keyword>
<keyword id="KW-0812">Transmembrane</keyword>
<keyword id="KW-1133">Transmembrane helix</keyword>
<gene>
    <name evidence="5" type="ORF">SPAC1639.01c</name>
    <name type="ORF">SPAC806.09c</name>
</gene>
<organism>
    <name type="scientific">Schizosaccharomyces pombe (strain 972 / ATCC 24843)</name>
    <name type="common">Fission yeast</name>
    <dbReference type="NCBI Taxonomy" id="284812"/>
    <lineage>
        <taxon>Eukaryota</taxon>
        <taxon>Fungi</taxon>
        <taxon>Dikarya</taxon>
        <taxon>Ascomycota</taxon>
        <taxon>Taphrinomycotina</taxon>
        <taxon>Schizosaccharomycetes</taxon>
        <taxon>Schizosaccharomycetales</taxon>
        <taxon>Schizosaccharomycetaceae</taxon>
        <taxon>Schizosaccharomyces</taxon>
    </lineage>
</organism>
<comment type="function">
    <text evidence="1">May be involved in the synthesis of very long chain fatty acids.</text>
</comment>
<comment type="catalytic activity">
    <reaction evidence="1">
        <text>a very-long-chain acyl-CoA + malonyl-CoA + H(+) = a very-long-chain 3-oxoacyl-CoA + CO2 + CoA</text>
        <dbReference type="Rhea" id="RHEA:32727"/>
        <dbReference type="ChEBI" id="CHEBI:15378"/>
        <dbReference type="ChEBI" id="CHEBI:16526"/>
        <dbReference type="ChEBI" id="CHEBI:57287"/>
        <dbReference type="ChEBI" id="CHEBI:57384"/>
        <dbReference type="ChEBI" id="CHEBI:90725"/>
        <dbReference type="ChEBI" id="CHEBI:90736"/>
        <dbReference type="EC" id="2.3.1.199"/>
    </reaction>
</comment>
<comment type="subcellular location">
    <subcellularLocation>
        <location evidence="1">Endoplasmic reticulum membrane</location>
        <topology evidence="2">Multi-pass membrane protein</topology>
    </subcellularLocation>
</comment>
<comment type="similarity">
    <text evidence="4">Belongs to the ELO family.</text>
</comment>
<dbReference type="EC" id="2.3.1.199" evidence="1"/>
<dbReference type="EMBL" id="CU329670">
    <property type="protein sequence ID" value="CAB55288.3"/>
    <property type="molecule type" value="Genomic_DNA"/>
</dbReference>
<dbReference type="PIR" id="T37734">
    <property type="entry name" value="T37734"/>
</dbReference>
<dbReference type="RefSeq" id="NP_592859.3">
    <property type="nucleotide sequence ID" value="NM_001018260.3"/>
</dbReference>
<dbReference type="SMR" id="Q7LKX0"/>
<dbReference type="BioGRID" id="279607">
    <property type="interactions" value="1"/>
</dbReference>
<dbReference type="FunCoup" id="Q7LKX0">
    <property type="interactions" value="159"/>
</dbReference>
<dbReference type="STRING" id="284812.Q7LKX0"/>
<dbReference type="iPTMnet" id="Q7LKX0"/>
<dbReference type="PaxDb" id="4896-SPAC1639.01c.1"/>
<dbReference type="EnsemblFungi" id="SPAC1639.01c.1">
    <property type="protein sequence ID" value="SPAC1639.01c.1:pep"/>
    <property type="gene ID" value="SPAC1639.01c"/>
</dbReference>
<dbReference type="GeneID" id="2543177"/>
<dbReference type="KEGG" id="spo:2543177"/>
<dbReference type="PomBase" id="SPAC1639.01c"/>
<dbReference type="VEuPathDB" id="FungiDB:SPAC1639.01c"/>
<dbReference type="eggNOG" id="KOG3071">
    <property type="taxonomic scope" value="Eukaryota"/>
</dbReference>
<dbReference type="HOGENOM" id="CLU_048483_6_1_1"/>
<dbReference type="InParanoid" id="Q7LKX0"/>
<dbReference type="OMA" id="CRFPMGW"/>
<dbReference type="Reactome" id="R-SPO-2046105">
    <property type="pathway name" value="Linoleic acid (LA) metabolism"/>
</dbReference>
<dbReference type="Reactome" id="R-SPO-2046106">
    <property type="pathway name" value="alpha-linolenic acid (ALA) metabolism"/>
</dbReference>
<dbReference type="Reactome" id="R-SPO-75876">
    <property type="pathway name" value="Synthesis of very long-chain fatty acyl-CoAs"/>
</dbReference>
<dbReference type="PRO" id="PR:Q7LKX0"/>
<dbReference type="Proteomes" id="UP000002485">
    <property type="component" value="Chromosome I"/>
</dbReference>
<dbReference type="GO" id="GO:0005829">
    <property type="term" value="C:cytosol"/>
    <property type="evidence" value="ECO:0007005"/>
    <property type="project" value="PomBase"/>
</dbReference>
<dbReference type="GO" id="GO:0005789">
    <property type="term" value="C:endoplasmic reticulum membrane"/>
    <property type="evidence" value="ECO:0000269"/>
    <property type="project" value="PomBase"/>
</dbReference>
<dbReference type="GO" id="GO:0031965">
    <property type="term" value="C:nuclear membrane"/>
    <property type="evidence" value="ECO:0000269"/>
    <property type="project" value="PomBase"/>
</dbReference>
<dbReference type="GO" id="GO:0005634">
    <property type="term" value="C:nucleus"/>
    <property type="evidence" value="ECO:0007005"/>
    <property type="project" value="PomBase"/>
</dbReference>
<dbReference type="GO" id="GO:0009922">
    <property type="term" value="F:fatty acid elongase activity"/>
    <property type="evidence" value="ECO:0000318"/>
    <property type="project" value="GO_Central"/>
</dbReference>
<dbReference type="GO" id="GO:0034625">
    <property type="term" value="P:fatty acid elongation, monounsaturated fatty acid"/>
    <property type="evidence" value="ECO:0000318"/>
    <property type="project" value="GO_Central"/>
</dbReference>
<dbReference type="GO" id="GO:0034626">
    <property type="term" value="P:fatty acid elongation, polyunsaturated fatty acid"/>
    <property type="evidence" value="ECO:0000318"/>
    <property type="project" value="GO_Central"/>
</dbReference>
<dbReference type="GO" id="GO:0019367">
    <property type="term" value="P:fatty acid elongation, saturated fatty acid"/>
    <property type="evidence" value="ECO:0000318"/>
    <property type="project" value="GO_Central"/>
</dbReference>
<dbReference type="GO" id="GO:0030148">
    <property type="term" value="P:sphingolipid biosynthetic process"/>
    <property type="evidence" value="ECO:0000318"/>
    <property type="project" value="GO_Central"/>
</dbReference>
<dbReference type="GO" id="GO:0042761">
    <property type="term" value="P:very long-chain fatty acid biosynthetic process"/>
    <property type="evidence" value="ECO:0000318"/>
    <property type="project" value="GO_Central"/>
</dbReference>
<dbReference type="InterPro" id="IPR002076">
    <property type="entry name" value="ELO_fam"/>
</dbReference>
<dbReference type="PANTHER" id="PTHR11157:SF134">
    <property type="entry name" value="ELONGATION OF FATTY ACIDS PROTEIN 1-RELATED"/>
    <property type="match status" value="1"/>
</dbReference>
<dbReference type="PANTHER" id="PTHR11157">
    <property type="entry name" value="FATTY ACID ACYL TRANSFERASE-RELATED"/>
    <property type="match status" value="1"/>
</dbReference>
<dbReference type="Pfam" id="PF01151">
    <property type="entry name" value="ELO"/>
    <property type="match status" value="1"/>
</dbReference>
<feature type="chain" id="PRO_0000350770" description="Putative fatty acid elongase 2">
    <location>
        <begin position="1"/>
        <end position="365"/>
    </location>
</feature>
<feature type="topological domain" description="Lumenal" evidence="1">
    <location>
        <begin position="1"/>
        <end position="68"/>
    </location>
</feature>
<feature type="transmembrane region" description="Helical; Name=1" evidence="2">
    <location>
        <begin position="69"/>
        <end position="89"/>
    </location>
</feature>
<feature type="topological domain" description="Cytoplasmic" evidence="1">
    <location>
        <begin position="90"/>
        <end position="111"/>
    </location>
</feature>
<feature type="transmembrane region" description="Helical; Name=2" evidence="2">
    <location>
        <begin position="112"/>
        <end position="132"/>
    </location>
</feature>
<feature type="topological domain" description="Lumenal" evidence="1">
    <location>
        <begin position="133"/>
        <end position="149"/>
    </location>
</feature>
<feature type="transmembrane region" description="Helical; Name=3" evidence="2">
    <location>
        <begin position="150"/>
        <end position="170"/>
    </location>
</feature>
<feature type="topological domain" description="Cytoplasmic" evidence="1">
    <location>
        <begin position="171"/>
        <end position="179"/>
    </location>
</feature>
<feature type="transmembrane region" description="Helical; Name=4" evidence="2">
    <location>
        <begin position="180"/>
        <end position="198"/>
    </location>
</feature>
<feature type="topological domain" description="Lumenal" evidence="1">
    <location>
        <begin position="199"/>
        <end position="204"/>
    </location>
</feature>
<feature type="transmembrane region" description="Helical; Name=5" evidence="2">
    <location>
        <begin position="205"/>
        <end position="225"/>
    </location>
</feature>
<feature type="topological domain" description="Cytoplasmic" evidence="1">
    <location>
        <begin position="226"/>
        <end position="241"/>
    </location>
</feature>
<feature type="transmembrane region" description="Helical; Name=6" evidence="2">
    <location>
        <begin position="242"/>
        <end position="262"/>
    </location>
</feature>
<feature type="topological domain" description="Lumenal" evidence="1">
    <location>
        <begin position="263"/>
        <end position="278"/>
    </location>
</feature>
<feature type="transmembrane region" description="Helical; Name=7" evidence="2">
    <location>
        <begin position="279"/>
        <end position="299"/>
    </location>
</feature>
<feature type="topological domain" description="Cytoplasmic" evidence="1">
    <location>
        <begin position="300"/>
        <end position="365"/>
    </location>
</feature>
<feature type="glycosylation site" description="N-linked (GlcNAc...) asparagine" evidence="3">
    <location>
        <position position="17"/>
    </location>
</feature>
<feature type="glycosylation site" description="N-linked (GlcNAc...) asparagine" evidence="3">
    <location>
        <position position="65"/>
    </location>
</feature>
<sequence>MPDSPTLHHNHIIGLENGSLTSNNNHQGMASVSVGQFQYPIWSWLNSLADATFGKRPSSFEFIVNKTRFSSAPVVATIIISYYLLILVGGRIMRNRQPIRLQKIFQYYNLTFSIASAILALLIFEQVAPAIYKHGFFFSICNEKAWTQPLVFLYYCAYISKFLELTDTFFLVLRKKPLQFLHCYHHGATAVLVYTQIVGRTSISWLIIEINLLVHVTMYYYYYLVAKGIRVPWKKWVTRFQIVQFFADLGFIYFAVYTEVAYRLKFYKACMGHCSGHPLAAFCGLATISSYLVLFIVFYHNTYKKNAALKMKAKAAAATKGNSSESSKNADLKRLSKSNASIAEVKCNNIVTNLYPISSGLNNEK</sequence>
<accession>Q7LKX0</accession>
<reference key="1">
    <citation type="journal article" date="2002" name="Nature">
        <title>The genome sequence of Schizosaccharomyces pombe.</title>
        <authorList>
            <person name="Wood V."/>
            <person name="Gwilliam R."/>
            <person name="Rajandream M.A."/>
            <person name="Lyne M.H."/>
            <person name="Lyne R."/>
            <person name="Stewart A."/>
            <person name="Sgouros J.G."/>
            <person name="Peat N."/>
            <person name="Hayles J."/>
            <person name="Baker S.G."/>
            <person name="Basham D."/>
            <person name="Bowman S."/>
            <person name="Brooks K."/>
            <person name="Brown D."/>
            <person name="Brown S."/>
            <person name="Chillingworth T."/>
            <person name="Churcher C.M."/>
            <person name="Collins M."/>
            <person name="Connor R."/>
            <person name="Cronin A."/>
            <person name="Davis P."/>
            <person name="Feltwell T."/>
            <person name="Fraser A."/>
            <person name="Gentles S."/>
            <person name="Goble A."/>
            <person name="Hamlin N."/>
            <person name="Harris D.E."/>
            <person name="Hidalgo J."/>
            <person name="Hodgson G."/>
            <person name="Holroyd S."/>
            <person name="Hornsby T."/>
            <person name="Howarth S."/>
            <person name="Huckle E.J."/>
            <person name="Hunt S."/>
            <person name="Jagels K."/>
            <person name="James K.D."/>
            <person name="Jones L."/>
            <person name="Jones M."/>
            <person name="Leather S."/>
            <person name="McDonald S."/>
            <person name="McLean J."/>
            <person name="Mooney P."/>
            <person name="Moule S."/>
            <person name="Mungall K.L."/>
            <person name="Murphy L.D."/>
            <person name="Niblett D."/>
            <person name="Odell C."/>
            <person name="Oliver K."/>
            <person name="O'Neil S."/>
            <person name="Pearson D."/>
            <person name="Quail M.A."/>
            <person name="Rabbinowitsch E."/>
            <person name="Rutherford K.M."/>
            <person name="Rutter S."/>
            <person name="Saunders D."/>
            <person name="Seeger K."/>
            <person name="Sharp S."/>
            <person name="Skelton J."/>
            <person name="Simmonds M.N."/>
            <person name="Squares R."/>
            <person name="Squares S."/>
            <person name="Stevens K."/>
            <person name="Taylor K."/>
            <person name="Taylor R.G."/>
            <person name="Tivey A."/>
            <person name="Walsh S.V."/>
            <person name="Warren T."/>
            <person name="Whitehead S."/>
            <person name="Woodward J.R."/>
            <person name="Volckaert G."/>
            <person name="Aert R."/>
            <person name="Robben J."/>
            <person name="Grymonprez B."/>
            <person name="Weltjens I."/>
            <person name="Vanstreels E."/>
            <person name="Rieger M."/>
            <person name="Schaefer M."/>
            <person name="Mueller-Auer S."/>
            <person name="Gabel C."/>
            <person name="Fuchs M."/>
            <person name="Duesterhoeft A."/>
            <person name="Fritzc C."/>
            <person name="Holzer E."/>
            <person name="Moestl D."/>
            <person name="Hilbert H."/>
            <person name="Borzym K."/>
            <person name="Langer I."/>
            <person name="Beck A."/>
            <person name="Lehrach H."/>
            <person name="Reinhardt R."/>
            <person name="Pohl T.M."/>
            <person name="Eger P."/>
            <person name="Zimmermann W."/>
            <person name="Wedler H."/>
            <person name="Wambutt R."/>
            <person name="Purnelle B."/>
            <person name="Goffeau A."/>
            <person name="Cadieu E."/>
            <person name="Dreano S."/>
            <person name="Gloux S."/>
            <person name="Lelaure V."/>
            <person name="Mottier S."/>
            <person name="Galibert F."/>
            <person name="Aves S.J."/>
            <person name="Xiang Z."/>
            <person name="Hunt C."/>
            <person name="Moore K."/>
            <person name="Hurst S.M."/>
            <person name="Lucas M."/>
            <person name="Rochet M."/>
            <person name="Gaillardin C."/>
            <person name="Tallada V.A."/>
            <person name="Garzon A."/>
            <person name="Thode G."/>
            <person name="Daga R.R."/>
            <person name="Cruzado L."/>
            <person name="Jimenez J."/>
            <person name="Sanchez M."/>
            <person name="del Rey F."/>
            <person name="Benito J."/>
            <person name="Dominguez A."/>
            <person name="Revuelta J.L."/>
            <person name="Moreno S."/>
            <person name="Armstrong J."/>
            <person name="Forsburg S.L."/>
            <person name="Cerutti L."/>
            <person name="Lowe T."/>
            <person name="McCombie W.R."/>
            <person name="Paulsen I."/>
            <person name="Potashkin J."/>
            <person name="Shpakovski G.V."/>
            <person name="Ussery D."/>
            <person name="Barrell B.G."/>
            <person name="Nurse P."/>
        </authorList>
    </citation>
    <scope>NUCLEOTIDE SEQUENCE [LARGE SCALE GENOMIC DNA]</scope>
    <source>
        <strain>972 / ATCC 24843</strain>
    </source>
</reference>
<reference key="2">
    <citation type="journal article" date="2011" name="Science">
        <title>Comparative functional genomics of the fission yeasts.</title>
        <authorList>
            <person name="Rhind N."/>
            <person name="Chen Z."/>
            <person name="Yassour M."/>
            <person name="Thompson D.A."/>
            <person name="Haas B.J."/>
            <person name="Habib N."/>
            <person name="Wapinski I."/>
            <person name="Roy S."/>
            <person name="Lin M.F."/>
            <person name="Heiman D.I."/>
            <person name="Young S.K."/>
            <person name="Furuya K."/>
            <person name="Guo Y."/>
            <person name="Pidoux A."/>
            <person name="Chen H.M."/>
            <person name="Robbertse B."/>
            <person name="Goldberg J.M."/>
            <person name="Aoki K."/>
            <person name="Bayne E.H."/>
            <person name="Berlin A.M."/>
            <person name="Desjardins C.A."/>
            <person name="Dobbs E."/>
            <person name="Dukaj L."/>
            <person name="Fan L."/>
            <person name="FitzGerald M.G."/>
            <person name="French C."/>
            <person name="Gujja S."/>
            <person name="Hansen K."/>
            <person name="Keifenheim D."/>
            <person name="Levin J.Z."/>
            <person name="Mosher R.A."/>
            <person name="Mueller C.A."/>
            <person name="Pfiffner J."/>
            <person name="Priest M."/>
            <person name="Russ C."/>
            <person name="Smialowska A."/>
            <person name="Swoboda P."/>
            <person name="Sykes S.M."/>
            <person name="Vaughn M."/>
            <person name="Vengrova S."/>
            <person name="Yoder R."/>
            <person name="Zeng Q."/>
            <person name="Allshire R."/>
            <person name="Baulcombe D."/>
            <person name="Birren B.W."/>
            <person name="Brown W."/>
            <person name="Ekwall K."/>
            <person name="Kellis M."/>
            <person name="Leatherwood J."/>
            <person name="Levin H."/>
            <person name="Margalit H."/>
            <person name="Martienssen R."/>
            <person name="Nieduszynski C.A."/>
            <person name="Spatafora J.W."/>
            <person name="Friedman N."/>
            <person name="Dalgaard J.Z."/>
            <person name="Baumann P."/>
            <person name="Niki H."/>
            <person name="Regev A."/>
            <person name="Nusbaum C."/>
        </authorList>
    </citation>
    <scope>REVISION OF GENE MODEL</scope>
</reference>
<proteinExistence type="inferred from homology"/>
<evidence type="ECO:0000250" key="1">
    <source>
        <dbReference type="UniProtKB" id="P25358"/>
    </source>
</evidence>
<evidence type="ECO:0000255" key="2"/>
<evidence type="ECO:0000255" key="3">
    <source>
        <dbReference type="PROSITE-ProRule" id="PRU00498"/>
    </source>
</evidence>
<evidence type="ECO:0000305" key="4"/>
<evidence type="ECO:0000312" key="5">
    <source>
        <dbReference type="PomBase" id="SPAC1639.01c"/>
    </source>
</evidence>
<protein>
    <recommendedName>
        <fullName evidence="4">Putative fatty acid elongase 2</fullName>
        <ecNumber evidence="1">2.3.1.199</ecNumber>
    </recommendedName>
    <alternativeName>
        <fullName evidence="1">3-keto acyl-CoA synthase SPAC1639.01c</fullName>
    </alternativeName>
    <alternativeName>
        <fullName evidence="1">Putative elongation of fatty acids protein 2</fullName>
    </alternativeName>
    <alternativeName>
        <fullName evidence="1">Very-long-chain 3-oxoacyl-CoA synthase 2</fullName>
    </alternativeName>
</protein>